<feature type="chain" id="PRO_0000159113" description="Ferredoxin">
    <location>
        <begin position="1"/>
        <end position="55"/>
    </location>
</feature>
<feature type="domain" description="4Fe-4S ferredoxin-type 1" evidence="2">
    <location>
        <begin position="2"/>
        <end position="27"/>
    </location>
</feature>
<feature type="domain" description="4Fe-4S ferredoxin-type 2" evidence="2">
    <location>
        <begin position="28"/>
        <end position="55"/>
    </location>
</feature>
<feature type="binding site" evidence="1">
    <location>
        <position position="8"/>
    </location>
    <ligand>
        <name>[4Fe-4S] cluster</name>
        <dbReference type="ChEBI" id="CHEBI:49883"/>
        <label>1</label>
    </ligand>
</feature>
<feature type="binding site" evidence="1">
    <location>
        <position position="11"/>
    </location>
    <ligand>
        <name>[4Fe-4S] cluster</name>
        <dbReference type="ChEBI" id="CHEBI:49883"/>
        <label>1</label>
    </ligand>
</feature>
<feature type="binding site" evidence="1">
    <location>
        <position position="14"/>
    </location>
    <ligand>
        <name>[4Fe-4S] cluster</name>
        <dbReference type="ChEBI" id="CHEBI:49883"/>
        <label>1</label>
    </ligand>
</feature>
<feature type="binding site" evidence="1">
    <location>
        <position position="18"/>
    </location>
    <ligand>
        <name>[4Fe-4S] cluster</name>
        <dbReference type="ChEBI" id="CHEBI:49883"/>
        <label>2</label>
    </ligand>
</feature>
<feature type="binding site" evidence="1">
    <location>
        <position position="37"/>
    </location>
    <ligand>
        <name>[4Fe-4S] cluster</name>
        <dbReference type="ChEBI" id="CHEBI:49883"/>
        <label>2</label>
    </ligand>
</feature>
<feature type="binding site" evidence="1">
    <location>
        <position position="40"/>
    </location>
    <ligand>
        <name>[4Fe-4S] cluster</name>
        <dbReference type="ChEBI" id="CHEBI:49883"/>
        <label>2</label>
    </ligand>
</feature>
<feature type="binding site" evidence="1">
    <location>
        <position position="43"/>
    </location>
    <ligand>
        <name>[4Fe-4S] cluster</name>
        <dbReference type="ChEBI" id="CHEBI:49883"/>
        <label>2</label>
    </ligand>
</feature>
<feature type="binding site" evidence="1">
    <location>
        <position position="47"/>
    </location>
    <ligand>
        <name>[4Fe-4S] cluster</name>
        <dbReference type="ChEBI" id="CHEBI:49883"/>
        <label>1</label>
    </ligand>
</feature>
<name>FER_CLOSM</name>
<protein>
    <recommendedName>
        <fullName>Ferredoxin</fullName>
    </recommendedName>
</protein>
<organism>
    <name type="scientific">Clostridium sp. (strain M-E)</name>
    <dbReference type="NCBI Taxonomy" id="69005"/>
    <lineage>
        <taxon>Bacteria</taxon>
        <taxon>Bacillati</taxon>
        <taxon>Bacillota</taxon>
        <taxon>Clostridia</taxon>
        <taxon>Eubacteriales</taxon>
        <taxon>Clostridiaceae</taxon>
        <taxon>Clostridium</taxon>
    </lineage>
</organism>
<dbReference type="SMR" id="P00197"/>
<dbReference type="GO" id="GO:0005737">
    <property type="term" value="C:cytoplasm"/>
    <property type="evidence" value="ECO:0007669"/>
    <property type="project" value="TreeGrafter"/>
</dbReference>
<dbReference type="GO" id="GO:0051539">
    <property type="term" value="F:4 iron, 4 sulfur cluster binding"/>
    <property type="evidence" value="ECO:0007669"/>
    <property type="project" value="UniProtKB-KW"/>
</dbReference>
<dbReference type="GO" id="GO:0009055">
    <property type="term" value="F:electron transfer activity"/>
    <property type="evidence" value="ECO:0007669"/>
    <property type="project" value="InterPro"/>
</dbReference>
<dbReference type="GO" id="GO:0046872">
    <property type="term" value="F:metal ion binding"/>
    <property type="evidence" value="ECO:0007669"/>
    <property type="project" value="UniProtKB-KW"/>
</dbReference>
<dbReference type="FunFam" id="3.30.70.20:FF:000045">
    <property type="entry name" value="Ferredoxin, 4Fe-4S"/>
    <property type="match status" value="1"/>
</dbReference>
<dbReference type="Gene3D" id="3.30.70.20">
    <property type="match status" value="1"/>
</dbReference>
<dbReference type="InterPro" id="IPR017896">
    <property type="entry name" value="4Fe4S_Fe-S-bd"/>
</dbReference>
<dbReference type="InterPro" id="IPR017900">
    <property type="entry name" value="4Fe4S_Fe_S_CS"/>
</dbReference>
<dbReference type="InterPro" id="IPR000813">
    <property type="entry name" value="7Fe_ferredoxin"/>
</dbReference>
<dbReference type="InterPro" id="IPR050157">
    <property type="entry name" value="PSI_iron-sulfur_center"/>
</dbReference>
<dbReference type="PANTHER" id="PTHR24960:SF79">
    <property type="entry name" value="PHOTOSYSTEM I IRON-SULFUR CENTER"/>
    <property type="match status" value="1"/>
</dbReference>
<dbReference type="PANTHER" id="PTHR24960">
    <property type="entry name" value="PHOTOSYSTEM I IRON-SULFUR CENTER-RELATED"/>
    <property type="match status" value="1"/>
</dbReference>
<dbReference type="Pfam" id="PF13187">
    <property type="entry name" value="Fer4_9"/>
    <property type="match status" value="1"/>
</dbReference>
<dbReference type="PRINTS" id="PR00354">
    <property type="entry name" value="7FE8SFRDOXIN"/>
</dbReference>
<dbReference type="SUPFAM" id="SSF54862">
    <property type="entry name" value="4Fe-4S ferredoxins"/>
    <property type="match status" value="1"/>
</dbReference>
<dbReference type="PROSITE" id="PS00198">
    <property type="entry name" value="4FE4S_FER_1"/>
    <property type="match status" value="2"/>
</dbReference>
<dbReference type="PROSITE" id="PS51379">
    <property type="entry name" value="4FE4S_FER_2"/>
    <property type="match status" value="2"/>
</dbReference>
<reference key="1">
    <citation type="journal article" date="1974" name="Biochemistry">
        <title>Amino acid sequence determination of the Clostridium M-E ferredoxin and a comment on the role of the aromatic residues in the clostridial ferredoxins.</title>
        <authorList>
            <person name="Tanaka M."/>
            <person name="Haniu M."/>
            <person name="Yasunobu K.T."/>
            <person name="Jones J.B."/>
            <person name="Stadtman T.C."/>
        </authorList>
    </citation>
    <scope>PROTEIN SEQUENCE</scope>
</reference>
<keyword id="KW-0004">4Fe-4S</keyword>
<keyword id="KW-0903">Direct protein sequencing</keyword>
<keyword id="KW-0249">Electron transport</keyword>
<keyword id="KW-0408">Iron</keyword>
<keyword id="KW-0411">Iron-sulfur</keyword>
<keyword id="KW-0479">Metal-binding</keyword>
<keyword id="KW-0677">Repeat</keyword>
<keyword id="KW-0813">Transport</keyword>
<proteinExistence type="evidence at protein level"/>
<evidence type="ECO:0000250" key="1"/>
<evidence type="ECO:0000255" key="2">
    <source>
        <dbReference type="PROSITE-ProRule" id="PRU00711"/>
    </source>
</evidence>
<comment type="function">
    <text>Ferredoxins are iron-sulfur proteins that transfer electrons in a wide variety of metabolic reactions.</text>
</comment>
<comment type="cofactor">
    <cofactor>
        <name>[4Fe-4S] cluster</name>
        <dbReference type="ChEBI" id="CHEBI:49883"/>
    </cofactor>
    <text>Binds 2 [4Fe-4S] clusters.</text>
</comment>
<sequence length="55" mass="5622">AYKITDGCINCGACEPECPVEAISESDAVRVIDADKCIDCGACANTCPVDAIVEG</sequence>
<accession>P00197</accession>